<gene>
    <name evidence="5 7" type="primary">SDHAF4</name>
    <name type="synonym">C6orf57</name>
</gene>
<dbReference type="EMBL" id="AL583856">
    <property type="status" value="NOT_ANNOTATED_CDS"/>
    <property type="molecule type" value="Genomic_DNA"/>
</dbReference>
<dbReference type="EMBL" id="CH471051">
    <property type="protein sequence ID" value="EAW48810.1"/>
    <property type="molecule type" value="Genomic_DNA"/>
</dbReference>
<dbReference type="EMBL" id="CH471051">
    <property type="protein sequence ID" value="EAW48812.1"/>
    <property type="molecule type" value="Genomic_DNA"/>
</dbReference>
<dbReference type="EMBL" id="BC104649">
    <property type="protein sequence ID" value="AAI04650.1"/>
    <property type="molecule type" value="mRNA"/>
</dbReference>
<dbReference type="CCDS" id="CCDS4972.1"/>
<dbReference type="RefSeq" id="NP_660310.2">
    <property type="nucleotide sequence ID" value="NM_145267.2"/>
</dbReference>
<dbReference type="PDB" id="8DYD">
    <property type="method" value="X-ray"/>
    <property type="resolution" value="1.52 A"/>
    <property type="chains" value="C=34-108"/>
</dbReference>
<dbReference type="PDB" id="8DYE">
    <property type="method" value="X-ray"/>
    <property type="resolution" value="1.44 A"/>
    <property type="chains" value="B=34-108"/>
</dbReference>
<dbReference type="PDBsum" id="8DYD"/>
<dbReference type="PDBsum" id="8DYE"/>
<dbReference type="SMR" id="Q5VUM1"/>
<dbReference type="BioGRID" id="126423">
    <property type="interactions" value="13"/>
</dbReference>
<dbReference type="FunCoup" id="Q5VUM1">
    <property type="interactions" value="46"/>
</dbReference>
<dbReference type="IntAct" id="Q5VUM1">
    <property type="interactions" value="11"/>
</dbReference>
<dbReference type="STRING" id="9606.ENSP00000359505"/>
<dbReference type="iPTMnet" id="Q5VUM1"/>
<dbReference type="PhosphoSitePlus" id="Q5VUM1"/>
<dbReference type="BioMuta" id="SDHAF4"/>
<dbReference type="DMDM" id="74747126"/>
<dbReference type="jPOST" id="Q5VUM1"/>
<dbReference type="MassIVE" id="Q5VUM1"/>
<dbReference type="PaxDb" id="9606-ENSP00000359505"/>
<dbReference type="PeptideAtlas" id="Q5VUM1"/>
<dbReference type="ProteomicsDB" id="65425"/>
<dbReference type="Pumba" id="Q5VUM1"/>
<dbReference type="TopDownProteomics" id="Q5VUM1"/>
<dbReference type="Antibodypedia" id="31244">
    <property type="antibodies" value="42 antibodies from 10 providers"/>
</dbReference>
<dbReference type="DNASU" id="135154"/>
<dbReference type="Ensembl" id="ENST00000370474.4">
    <property type="protein sequence ID" value="ENSP00000359505.3"/>
    <property type="gene ID" value="ENSG00000154079.6"/>
</dbReference>
<dbReference type="GeneID" id="135154"/>
<dbReference type="KEGG" id="hsa:135154"/>
<dbReference type="MANE-Select" id="ENST00000370474.4">
    <property type="protein sequence ID" value="ENSP00000359505.3"/>
    <property type="RefSeq nucleotide sequence ID" value="NM_145267.3"/>
    <property type="RefSeq protein sequence ID" value="NP_660310.2"/>
</dbReference>
<dbReference type="UCSC" id="uc003pfq.2">
    <property type="organism name" value="human"/>
</dbReference>
<dbReference type="AGR" id="HGNC:20957"/>
<dbReference type="CTD" id="135154"/>
<dbReference type="DisGeNET" id="135154"/>
<dbReference type="GeneCards" id="SDHAF4"/>
<dbReference type="HGNC" id="HGNC:20957">
    <property type="gene designation" value="SDHAF4"/>
</dbReference>
<dbReference type="HPA" id="ENSG00000154079">
    <property type="expression patterns" value="Low tissue specificity"/>
</dbReference>
<dbReference type="MalaCards" id="SDHAF4"/>
<dbReference type="MIM" id="619198">
    <property type="type" value="gene"/>
</dbReference>
<dbReference type="neXtProt" id="NX_Q5VUM1"/>
<dbReference type="OpenTargets" id="ENSG00000154079"/>
<dbReference type="PharmGKB" id="PA134932684"/>
<dbReference type="VEuPathDB" id="HostDB:ENSG00000154079"/>
<dbReference type="eggNOG" id="KOG3245">
    <property type="taxonomic scope" value="Eukaryota"/>
</dbReference>
<dbReference type="GeneTree" id="ENSGT00390000009155"/>
<dbReference type="HOGENOM" id="CLU_160299_0_0_1"/>
<dbReference type="InParanoid" id="Q5VUM1"/>
<dbReference type="OMA" id="KPGHAKQ"/>
<dbReference type="OrthoDB" id="201362at2759"/>
<dbReference type="PAN-GO" id="Q5VUM1">
    <property type="GO annotations" value="2 GO annotations based on evolutionary models"/>
</dbReference>
<dbReference type="PhylomeDB" id="Q5VUM1"/>
<dbReference type="TreeFam" id="TF106123"/>
<dbReference type="PathwayCommons" id="Q5VUM1"/>
<dbReference type="Reactome" id="R-HSA-9854311">
    <property type="pathway name" value="Maturation of TCA enzymes and regulation of TCA cycle"/>
</dbReference>
<dbReference type="SignaLink" id="Q5VUM1"/>
<dbReference type="BioGRID-ORCS" id="135154">
    <property type="hits" value="13 hits in 1049 CRISPR screens"/>
</dbReference>
<dbReference type="ChiTaRS" id="SDHAF4">
    <property type="organism name" value="human"/>
</dbReference>
<dbReference type="GenomeRNAi" id="135154"/>
<dbReference type="Pharos" id="Q5VUM1">
    <property type="development level" value="Tbio"/>
</dbReference>
<dbReference type="PRO" id="PR:Q5VUM1"/>
<dbReference type="Proteomes" id="UP000005640">
    <property type="component" value="Chromosome 6"/>
</dbReference>
<dbReference type="RNAct" id="Q5VUM1">
    <property type="molecule type" value="protein"/>
</dbReference>
<dbReference type="Bgee" id="ENSG00000154079">
    <property type="expression patterns" value="Expressed in hindlimb stylopod muscle and 171 other cell types or tissues"/>
</dbReference>
<dbReference type="GO" id="GO:0005759">
    <property type="term" value="C:mitochondrial matrix"/>
    <property type="evidence" value="ECO:0000304"/>
    <property type="project" value="Reactome"/>
</dbReference>
<dbReference type="GO" id="GO:0005739">
    <property type="term" value="C:mitochondrion"/>
    <property type="evidence" value="ECO:0006056"/>
    <property type="project" value="FlyBase"/>
</dbReference>
<dbReference type="GO" id="GO:0008047">
    <property type="term" value="F:enzyme activator activity"/>
    <property type="evidence" value="ECO:0000250"/>
    <property type="project" value="UniProtKB"/>
</dbReference>
<dbReference type="GO" id="GO:0044183">
    <property type="term" value="F:protein folding chaperone"/>
    <property type="evidence" value="ECO:0000304"/>
    <property type="project" value="Reactome"/>
</dbReference>
<dbReference type="GO" id="GO:0045333">
    <property type="term" value="P:cellular respiration"/>
    <property type="evidence" value="ECO:0000316"/>
    <property type="project" value="UniProtKB"/>
</dbReference>
<dbReference type="GO" id="GO:0045087">
    <property type="term" value="P:innate immune response"/>
    <property type="evidence" value="ECO:0007669"/>
    <property type="project" value="Ensembl"/>
</dbReference>
<dbReference type="GO" id="GO:0034553">
    <property type="term" value="P:mitochondrial respiratory chain complex II assembly"/>
    <property type="evidence" value="ECO:0000316"/>
    <property type="project" value="UniProtKB"/>
</dbReference>
<dbReference type="GO" id="GO:0006099">
    <property type="term" value="P:tricarboxylic acid cycle"/>
    <property type="evidence" value="ECO:0000304"/>
    <property type="project" value="Reactome"/>
</dbReference>
<dbReference type="InterPro" id="IPR012875">
    <property type="entry name" value="SDHF4"/>
</dbReference>
<dbReference type="PANTHER" id="PTHR28524">
    <property type="entry name" value="SUCCINATE DEHYDROGENASE ASSEMBLY FACTOR 4, MITOCHONDRIAL"/>
    <property type="match status" value="1"/>
</dbReference>
<dbReference type="PANTHER" id="PTHR28524:SF3">
    <property type="entry name" value="SUCCINATE DEHYDROGENASE ASSEMBLY FACTOR 4, MITOCHONDRIAL"/>
    <property type="match status" value="1"/>
</dbReference>
<dbReference type="Pfam" id="PF07896">
    <property type="entry name" value="DUF1674"/>
    <property type="match status" value="1"/>
</dbReference>
<feature type="transit peptide" description="Mitochondrion" evidence="2">
    <location>
        <begin position="1"/>
        <end position="20"/>
    </location>
</feature>
<feature type="chain" id="PRO_0000244340" description="Succinate dehydrogenase assembly factor 4, mitochondrial">
    <location>
        <begin position="21"/>
        <end position="108"/>
    </location>
</feature>
<feature type="region of interest" description="Disordered" evidence="3">
    <location>
        <begin position="31"/>
        <end position="108"/>
    </location>
</feature>
<feature type="compositionally biased region" description="Basic and acidic residues" evidence="3">
    <location>
        <begin position="52"/>
        <end position="87"/>
    </location>
</feature>
<feature type="compositionally biased region" description="Basic and acidic residues" evidence="3">
    <location>
        <begin position="95"/>
        <end position="108"/>
    </location>
</feature>
<feature type="sequence variant" id="VAR_026890" description="In dbSNP:rs1048886.">
    <original>Q</original>
    <variation>R</variation>
    <location>
        <position position="46"/>
    </location>
</feature>
<feature type="sequence variant" id="VAR_053598" description="In dbSNP:rs34711085.">
    <original>R</original>
    <variation>C</variation>
    <location>
        <position position="57"/>
    </location>
</feature>
<feature type="helix" evidence="8">
    <location>
        <begin position="75"/>
        <end position="77"/>
    </location>
</feature>
<feature type="turn" evidence="8">
    <location>
        <begin position="80"/>
        <end position="82"/>
    </location>
</feature>
<feature type="turn" evidence="8">
    <location>
        <begin position="93"/>
        <end position="96"/>
    </location>
</feature>
<feature type="strand" evidence="8">
    <location>
        <begin position="97"/>
        <end position="101"/>
    </location>
</feature>
<feature type="strand" evidence="8">
    <location>
        <begin position="104"/>
        <end position="107"/>
    </location>
</feature>
<organism>
    <name type="scientific">Homo sapiens</name>
    <name type="common">Human</name>
    <dbReference type="NCBI Taxonomy" id="9606"/>
    <lineage>
        <taxon>Eukaryota</taxon>
        <taxon>Metazoa</taxon>
        <taxon>Chordata</taxon>
        <taxon>Craniata</taxon>
        <taxon>Vertebrata</taxon>
        <taxon>Euteleostomi</taxon>
        <taxon>Mammalia</taxon>
        <taxon>Eutheria</taxon>
        <taxon>Euarchontoglires</taxon>
        <taxon>Primates</taxon>
        <taxon>Haplorrhini</taxon>
        <taxon>Catarrhini</taxon>
        <taxon>Hominidae</taxon>
        <taxon>Homo</taxon>
    </lineage>
</organism>
<accession>Q5VUM1</accession>
<accession>E1P532</accession>
<name>SDHF4_HUMAN</name>
<keyword id="KW-0002">3D-structure</keyword>
<keyword id="KW-0143">Chaperone</keyword>
<keyword id="KW-0496">Mitochondrion</keyword>
<keyword id="KW-1267">Proteomics identification</keyword>
<keyword id="KW-1185">Reference proteome</keyword>
<keyword id="KW-0809">Transit peptide</keyword>
<protein>
    <recommendedName>
        <fullName evidence="5 7">Succinate dehydrogenase assembly factor 4, mitochondrial</fullName>
        <shortName evidence="5">SDH assembly factor 4</shortName>
        <shortName evidence="5">SDHAF4</shortName>
    </recommendedName>
</protein>
<sequence length="108" mass="12213">MTPSRLPWLLSWVSATAWRAARSPLLCHSLRKTSSSQGGKSELVKQSLKKPKLPEGRFDAPEDSHLEKEPLEKFPDDVNPVTKEKGGPRGPEPTRYGDWERKGRCIDF</sequence>
<proteinExistence type="evidence at protein level"/>
<evidence type="ECO:0000250" key="1">
    <source>
        <dbReference type="UniProtKB" id="P38345"/>
    </source>
</evidence>
<evidence type="ECO:0000255" key="2"/>
<evidence type="ECO:0000256" key="3">
    <source>
        <dbReference type="SAM" id="MobiDB-lite"/>
    </source>
</evidence>
<evidence type="ECO:0000269" key="4">
    <source>
    </source>
</evidence>
<evidence type="ECO:0000303" key="5">
    <source>
    </source>
</evidence>
<evidence type="ECO:0000305" key="6"/>
<evidence type="ECO:0000312" key="7">
    <source>
        <dbReference type="HGNC" id="HGNC:20957"/>
    </source>
</evidence>
<evidence type="ECO:0007829" key="8">
    <source>
        <dbReference type="PDB" id="8DYE"/>
    </source>
</evidence>
<reference key="1">
    <citation type="journal article" date="2003" name="Nature">
        <title>The DNA sequence and analysis of human chromosome 6.</title>
        <authorList>
            <person name="Mungall A.J."/>
            <person name="Palmer S.A."/>
            <person name="Sims S.K."/>
            <person name="Edwards C.A."/>
            <person name="Ashurst J.L."/>
            <person name="Wilming L."/>
            <person name="Jones M.C."/>
            <person name="Horton R."/>
            <person name="Hunt S.E."/>
            <person name="Scott C.E."/>
            <person name="Gilbert J.G.R."/>
            <person name="Clamp M.E."/>
            <person name="Bethel G."/>
            <person name="Milne S."/>
            <person name="Ainscough R."/>
            <person name="Almeida J.P."/>
            <person name="Ambrose K.D."/>
            <person name="Andrews T.D."/>
            <person name="Ashwell R.I.S."/>
            <person name="Babbage A.K."/>
            <person name="Bagguley C.L."/>
            <person name="Bailey J."/>
            <person name="Banerjee R."/>
            <person name="Barker D.J."/>
            <person name="Barlow K.F."/>
            <person name="Bates K."/>
            <person name="Beare D.M."/>
            <person name="Beasley H."/>
            <person name="Beasley O."/>
            <person name="Bird C.P."/>
            <person name="Blakey S.E."/>
            <person name="Bray-Allen S."/>
            <person name="Brook J."/>
            <person name="Brown A.J."/>
            <person name="Brown J.Y."/>
            <person name="Burford D.C."/>
            <person name="Burrill W."/>
            <person name="Burton J."/>
            <person name="Carder C."/>
            <person name="Carter N.P."/>
            <person name="Chapman J.C."/>
            <person name="Clark S.Y."/>
            <person name="Clark G."/>
            <person name="Clee C.M."/>
            <person name="Clegg S."/>
            <person name="Cobley V."/>
            <person name="Collier R.E."/>
            <person name="Collins J.E."/>
            <person name="Colman L.K."/>
            <person name="Corby N.R."/>
            <person name="Coville G.J."/>
            <person name="Culley K.M."/>
            <person name="Dhami P."/>
            <person name="Davies J."/>
            <person name="Dunn M."/>
            <person name="Earthrowl M.E."/>
            <person name="Ellington A.E."/>
            <person name="Evans K.A."/>
            <person name="Faulkner L."/>
            <person name="Francis M.D."/>
            <person name="Frankish A."/>
            <person name="Frankland J."/>
            <person name="French L."/>
            <person name="Garner P."/>
            <person name="Garnett J."/>
            <person name="Ghori M.J."/>
            <person name="Gilby L.M."/>
            <person name="Gillson C.J."/>
            <person name="Glithero R.J."/>
            <person name="Grafham D.V."/>
            <person name="Grant M."/>
            <person name="Gribble S."/>
            <person name="Griffiths C."/>
            <person name="Griffiths M.N.D."/>
            <person name="Hall R."/>
            <person name="Halls K.S."/>
            <person name="Hammond S."/>
            <person name="Harley J.L."/>
            <person name="Hart E.A."/>
            <person name="Heath P.D."/>
            <person name="Heathcott R."/>
            <person name="Holmes S.J."/>
            <person name="Howden P.J."/>
            <person name="Howe K.L."/>
            <person name="Howell G.R."/>
            <person name="Huckle E."/>
            <person name="Humphray S.J."/>
            <person name="Humphries M.D."/>
            <person name="Hunt A.R."/>
            <person name="Johnson C.M."/>
            <person name="Joy A.A."/>
            <person name="Kay M."/>
            <person name="Keenan S.J."/>
            <person name="Kimberley A.M."/>
            <person name="King A."/>
            <person name="Laird G.K."/>
            <person name="Langford C."/>
            <person name="Lawlor S."/>
            <person name="Leongamornlert D.A."/>
            <person name="Leversha M."/>
            <person name="Lloyd C.R."/>
            <person name="Lloyd D.M."/>
            <person name="Loveland J.E."/>
            <person name="Lovell J."/>
            <person name="Martin S."/>
            <person name="Mashreghi-Mohammadi M."/>
            <person name="Maslen G.L."/>
            <person name="Matthews L."/>
            <person name="McCann O.T."/>
            <person name="McLaren S.J."/>
            <person name="McLay K."/>
            <person name="McMurray A."/>
            <person name="Moore M.J.F."/>
            <person name="Mullikin J.C."/>
            <person name="Niblett D."/>
            <person name="Nickerson T."/>
            <person name="Novik K.L."/>
            <person name="Oliver K."/>
            <person name="Overton-Larty E.K."/>
            <person name="Parker A."/>
            <person name="Patel R."/>
            <person name="Pearce A.V."/>
            <person name="Peck A.I."/>
            <person name="Phillimore B.J.C.T."/>
            <person name="Phillips S."/>
            <person name="Plumb R.W."/>
            <person name="Porter K.M."/>
            <person name="Ramsey Y."/>
            <person name="Ranby S.A."/>
            <person name="Rice C.M."/>
            <person name="Ross M.T."/>
            <person name="Searle S.M."/>
            <person name="Sehra H.K."/>
            <person name="Sheridan E."/>
            <person name="Skuce C.D."/>
            <person name="Smith S."/>
            <person name="Smith M."/>
            <person name="Spraggon L."/>
            <person name="Squares S.L."/>
            <person name="Steward C.A."/>
            <person name="Sycamore N."/>
            <person name="Tamlyn-Hall G."/>
            <person name="Tester J."/>
            <person name="Theaker A.J."/>
            <person name="Thomas D.W."/>
            <person name="Thorpe A."/>
            <person name="Tracey A."/>
            <person name="Tromans A."/>
            <person name="Tubby B."/>
            <person name="Wall M."/>
            <person name="Wallis J.M."/>
            <person name="West A.P."/>
            <person name="White S.S."/>
            <person name="Whitehead S.L."/>
            <person name="Whittaker H."/>
            <person name="Wild A."/>
            <person name="Willey D.J."/>
            <person name="Wilmer T.E."/>
            <person name="Wood J.M."/>
            <person name="Wray P.W."/>
            <person name="Wyatt J.C."/>
            <person name="Young L."/>
            <person name="Younger R.M."/>
            <person name="Bentley D.R."/>
            <person name="Coulson A."/>
            <person name="Durbin R.M."/>
            <person name="Hubbard T."/>
            <person name="Sulston J.E."/>
            <person name="Dunham I."/>
            <person name="Rogers J."/>
            <person name="Beck S."/>
        </authorList>
    </citation>
    <scope>NUCLEOTIDE SEQUENCE [LARGE SCALE GENOMIC DNA]</scope>
</reference>
<reference key="2">
    <citation type="submission" date="2005-09" db="EMBL/GenBank/DDBJ databases">
        <authorList>
            <person name="Mural R.J."/>
            <person name="Istrail S."/>
            <person name="Sutton G.G."/>
            <person name="Florea L."/>
            <person name="Halpern A.L."/>
            <person name="Mobarry C.M."/>
            <person name="Lippert R."/>
            <person name="Walenz B."/>
            <person name="Shatkay H."/>
            <person name="Dew I."/>
            <person name="Miller J.R."/>
            <person name="Flanigan M.J."/>
            <person name="Edwards N.J."/>
            <person name="Bolanos R."/>
            <person name="Fasulo D."/>
            <person name="Halldorsson B.V."/>
            <person name="Hannenhalli S."/>
            <person name="Turner R."/>
            <person name="Yooseph S."/>
            <person name="Lu F."/>
            <person name="Nusskern D.R."/>
            <person name="Shue B.C."/>
            <person name="Zheng X.H."/>
            <person name="Zhong F."/>
            <person name="Delcher A.L."/>
            <person name="Huson D.H."/>
            <person name="Kravitz S.A."/>
            <person name="Mouchard L."/>
            <person name="Reinert K."/>
            <person name="Remington K.A."/>
            <person name="Clark A.G."/>
            <person name="Waterman M.S."/>
            <person name="Eichler E.E."/>
            <person name="Adams M.D."/>
            <person name="Hunkapiller M.W."/>
            <person name="Myers E.W."/>
            <person name="Venter J.C."/>
        </authorList>
    </citation>
    <scope>NUCLEOTIDE SEQUENCE [LARGE SCALE GENOMIC DNA]</scope>
</reference>
<reference key="3">
    <citation type="journal article" date="2004" name="Genome Res.">
        <title>The status, quality, and expansion of the NIH full-length cDNA project: the Mammalian Gene Collection (MGC).</title>
        <authorList>
            <consortium name="The MGC Project Team"/>
        </authorList>
    </citation>
    <scope>NUCLEOTIDE SEQUENCE [LARGE SCALE MRNA]</scope>
</reference>
<reference key="4">
    <citation type="journal article" date="2014" name="Cell Metab.">
        <title>SDHAF4 promotes mitochondrial succinate dehydrogenase activity and prevents neurodegeneration.</title>
        <authorList>
            <person name="Van Vranken J.G."/>
            <person name="Bricker D.K."/>
            <person name="Dephoure N."/>
            <person name="Gygi S.P."/>
            <person name="Cox J.E."/>
            <person name="Thummel C.S."/>
            <person name="Rutter J."/>
        </authorList>
    </citation>
    <scope>FUNCTION</scope>
</reference>
<comment type="function">
    <text evidence="1 4">Plays an essential role in the assembly of succinate dehydrogenase (SDH), an enzyme complex (also referred to as respiratory complex II) that is a component of both the tricarboxylic acid (TCA) cycle and the mitochondrial electron transport chain, and which couples the oxidation of succinate to fumarate with the reduction of ubiquinone (coenzyme Q) to ubiquinol (PubMed:24954416). Binds to the flavoprotein subunit SDHA in its FAD-bound form, blocking the generation of excess reactive oxygen species (ROS) and facilitating its assembly with the iron-sulfur protein subunit SDHB into the SDH catalytic dimer (By similarity).</text>
</comment>
<comment type="subunit">
    <text evidence="1">Interacts with SDHA in its FAD-bound form.</text>
</comment>
<comment type="interaction">
    <interactant intactId="EBI-16769525">
        <id>Q5VUM1</id>
    </interactant>
    <interactant intactId="EBI-712921">
        <id>P60033</id>
        <label>CD81</label>
    </interactant>
    <organismsDiffer>false</organismsDiffer>
    <experiments>3</experiments>
</comment>
<comment type="interaction">
    <interactant intactId="EBI-16769525">
        <id>Q5VUM1</id>
    </interactant>
    <interactant intactId="EBI-1058710">
        <id>O43169</id>
        <label>CYB5B</label>
    </interactant>
    <organismsDiffer>false</organismsDiffer>
    <experiments>3</experiments>
</comment>
<comment type="interaction">
    <interactant intactId="EBI-16769525">
        <id>Q5VUM1</id>
    </interactant>
    <interactant intactId="EBI-12237619">
        <id>O75841</id>
        <label>UPK1B</label>
    </interactant>
    <organismsDiffer>false</organismsDiffer>
    <experiments>3</experiments>
</comment>
<comment type="subcellular location">
    <subcellularLocation>
        <location evidence="1">Mitochondrion matrix</location>
    </subcellularLocation>
</comment>
<comment type="similarity">
    <text evidence="6">Belongs to the SDHAF4 family.</text>
</comment>